<dbReference type="EMBL" id="BX950851">
    <property type="protein sequence ID" value="CAG77162.1"/>
    <property type="molecule type" value="Genomic_DNA"/>
</dbReference>
<dbReference type="RefSeq" id="WP_011095734.1">
    <property type="nucleotide sequence ID" value="NC_004547.2"/>
</dbReference>
<dbReference type="SMR" id="Q6CZ88"/>
<dbReference type="STRING" id="218491.ECA4265"/>
<dbReference type="GeneID" id="57210937"/>
<dbReference type="KEGG" id="eca:ECA4265"/>
<dbReference type="PATRIC" id="fig|218491.5.peg.4342"/>
<dbReference type="eggNOG" id="COG3074">
    <property type="taxonomic scope" value="Bacteria"/>
</dbReference>
<dbReference type="HOGENOM" id="CLU_171174_2_0_6"/>
<dbReference type="OrthoDB" id="6554593at2"/>
<dbReference type="Proteomes" id="UP000007966">
    <property type="component" value="Chromosome"/>
</dbReference>
<dbReference type="GO" id="GO:0005737">
    <property type="term" value="C:cytoplasm"/>
    <property type="evidence" value="ECO:0007669"/>
    <property type="project" value="UniProtKB-SubCell"/>
</dbReference>
<dbReference type="GO" id="GO:0000917">
    <property type="term" value="P:division septum assembly"/>
    <property type="evidence" value="ECO:0007669"/>
    <property type="project" value="UniProtKB-KW"/>
</dbReference>
<dbReference type="GO" id="GO:0043093">
    <property type="term" value="P:FtsZ-dependent cytokinesis"/>
    <property type="evidence" value="ECO:0007669"/>
    <property type="project" value="UniProtKB-UniRule"/>
</dbReference>
<dbReference type="Gene3D" id="1.20.5.340">
    <property type="match status" value="1"/>
</dbReference>
<dbReference type="HAMAP" id="MF_01196">
    <property type="entry name" value="ZapB"/>
    <property type="match status" value="1"/>
</dbReference>
<dbReference type="InterPro" id="IPR009252">
    <property type="entry name" value="Cell_div_ZapB"/>
</dbReference>
<dbReference type="NCBIfam" id="NF011951">
    <property type="entry name" value="PRK15422.1"/>
    <property type="match status" value="1"/>
</dbReference>
<dbReference type="Pfam" id="PF06005">
    <property type="entry name" value="ZapB"/>
    <property type="match status" value="1"/>
</dbReference>
<comment type="function">
    <text evidence="1">Non-essential, abundant cell division factor that is required for proper Z-ring formation. It is recruited early to the divisome by direct interaction with FtsZ, stimulating Z-ring assembly and thereby promoting cell division earlier in the cell cycle. Its recruitment to the Z-ring requires functional FtsA or ZipA.</text>
</comment>
<comment type="subunit">
    <text evidence="1">Homodimer. The ends of the coiled-coil dimer bind to each other, forming polymers. Interacts with FtsZ.</text>
</comment>
<comment type="subcellular location">
    <subcellularLocation>
        <location>Cytoplasm</location>
    </subcellularLocation>
    <text evidence="1">Localizes to the septum at mid-cell, in a FtsZ-like pattern.</text>
</comment>
<comment type="similarity">
    <text evidence="1">Belongs to the ZapB family.</text>
</comment>
<reference key="1">
    <citation type="journal article" date="2004" name="Proc. Natl. Acad. Sci. U.S.A.">
        <title>Genome sequence of the enterobacterial phytopathogen Erwinia carotovora subsp. atroseptica and characterization of virulence factors.</title>
        <authorList>
            <person name="Bell K.S."/>
            <person name="Sebaihia M."/>
            <person name="Pritchard L."/>
            <person name="Holden M.T.G."/>
            <person name="Hyman L.J."/>
            <person name="Holeva M.C."/>
            <person name="Thomson N.R."/>
            <person name="Bentley S.D."/>
            <person name="Churcher L.J.C."/>
            <person name="Mungall K."/>
            <person name="Atkin R."/>
            <person name="Bason N."/>
            <person name="Brooks K."/>
            <person name="Chillingworth T."/>
            <person name="Clark K."/>
            <person name="Doggett J."/>
            <person name="Fraser A."/>
            <person name="Hance Z."/>
            <person name="Hauser H."/>
            <person name="Jagels K."/>
            <person name="Moule S."/>
            <person name="Norbertczak H."/>
            <person name="Ormond D."/>
            <person name="Price C."/>
            <person name="Quail M.A."/>
            <person name="Sanders M."/>
            <person name="Walker D."/>
            <person name="Whitehead S."/>
            <person name="Salmond G.P.C."/>
            <person name="Birch P.R.J."/>
            <person name="Parkhill J."/>
            <person name="Toth I.K."/>
        </authorList>
    </citation>
    <scope>NUCLEOTIDE SEQUENCE [LARGE SCALE GENOMIC DNA]</scope>
    <source>
        <strain>SCRI 1043 / ATCC BAA-672</strain>
    </source>
</reference>
<evidence type="ECO:0000255" key="1">
    <source>
        <dbReference type="HAMAP-Rule" id="MF_01196"/>
    </source>
</evidence>
<gene>
    <name evidence="1" type="primary">zapB</name>
    <name type="ordered locus">ECA4265</name>
</gene>
<organism>
    <name type="scientific">Pectobacterium atrosepticum (strain SCRI 1043 / ATCC BAA-672)</name>
    <name type="common">Erwinia carotovora subsp. atroseptica</name>
    <dbReference type="NCBI Taxonomy" id="218491"/>
    <lineage>
        <taxon>Bacteria</taxon>
        <taxon>Pseudomonadati</taxon>
        <taxon>Pseudomonadota</taxon>
        <taxon>Gammaproteobacteria</taxon>
        <taxon>Enterobacterales</taxon>
        <taxon>Pectobacteriaceae</taxon>
        <taxon>Pectobacterium</taxon>
    </lineage>
</organism>
<protein>
    <recommendedName>
        <fullName evidence="1">Cell division protein ZapB</fullName>
    </recommendedName>
</protein>
<proteinExistence type="inferred from homology"/>
<name>ZAPB_PECAS</name>
<feature type="chain" id="PRO_0000333898" description="Cell division protein ZapB">
    <location>
        <begin position="1"/>
        <end position="79"/>
    </location>
</feature>
<feature type="coiled-coil region" evidence="1">
    <location>
        <begin position="4"/>
        <end position="78"/>
    </location>
</feature>
<accession>Q6CZ88</accession>
<sequence length="79" mass="9177">MSFEVFEKLEAKVQQAIDTITLLQMEIEELKEQNNTLSQDVQAAAGSRESLVRENEQLKEEQVVWQERLRALLGKMEEV</sequence>
<keyword id="KW-0131">Cell cycle</keyword>
<keyword id="KW-0132">Cell division</keyword>
<keyword id="KW-0175">Coiled coil</keyword>
<keyword id="KW-0963">Cytoplasm</keyword>
<keyword id="KW-1185">Reference proteome</keyword>
<keyword id="KW-0717">Septation</keyword>